<comment type="function">
    <text evidence="1">Involved in ubiquitin-mediated protein degradation. Regulatory factor in the ubiquitin/proteasome pathway that controls the turnover of proteasome substrates. Targets proteasomes to the nucleus and facilitates the degradation of nuclear proteins (By similarity).</text>
</comment>
<comment type="subunit">
    <text evidence="1">Binds the proteasome.</text>
</comment>
<comment type="subcellular location">
    <subcellularLocation>
        <location evidence="1">Cytoplasm</location>
    </subcellularLocation>
    <subcellularLocation>
        <location evidence="1">Nucleus</location>
    </subcellularLocation>
</comment>
<comment type="similarity">
    <text evidence="3">Belongs to the cut8/STS1 family.</text>
</comment>
<evidence type="ECO:0000250" key="1"/>
<evidence type="ECO:0000256" key="2">
    <source>
        <dbReference type="SAM" id="MobiDB-lite"/>
    </source>
</evidence>
<evidence type="ECO:0000305" key="3"/>
<accession>C5P8M7</accession>
<proteinExistence type="inferred from homology"/>
<keyword id="KW-0963">Cytoplasm</keyword>
<keyword id="KW-0539">Nucleus</keyword>
<keyword id="KW-0653">Protein transport</keyword>
<keyword id="KW-0813">Transport</keyword>
<dbReference type="EMBL" id="ACFW01000030">
    <property type="protein sequence ID" value="EER26089.1"/>
    <property type="molecule type" value="Genomic_DNA"/>
</dbReference>
<dbReference type="RefSeq" id="XP_003068234.1">
    <property type="nucleotide sequence ID" value="XM_003068188.1"/>
</dbReference>
<dbReference type="SMR" id="C5P8M7"/>
<dbReference type="VEuPathDB" id="FungiDB:CPC735_002580"/>
<dbReference type="HOGENOM" id="CLU_033658_0_0_1"/>
<dbReference type="OrthoDB" id="10061064at2759"/>
<dbReference type="Proteomes" id="UP000009084">
    <property type="component" value="Unassembled WGS sequence"/>
</dbReference>
<dbReference type="GO" id="GO:0005737">
    <property type="term" value="C:cytoplasm"/>
    <property type="evidence" value="ECO:0007669"/>
    <property type="project" value="UniProtKB-SubCell"/>
</dbReference>
<dbReference type="GO" id="GO:0031965">
    <property type="term" value="C:nuclear membrane"/>
    <property type="evidence" value="ECO:0007669"/>
    <property type="project" value="TreeGrafter"/>
</dbReference>
<dbReference type="GO" id="GO:0070628">
    <property type="term" value="F:proteasome binding"/>
    <property type="evidence" value="ECO:0007669"/>
    <property type="project" value="TreeGrafter"/>
</dbReference>
<dbReference type="GO" id="GO:0071630">
    <property type="term" value="P:nuclear protein quality control by the ubiquitin-proteasome system"/>
    <property type="evidence" value="ECO:0007669"/>
    <property type="project" value="InterPro"/>
</dbReference>
<dbReference type="GO" id="GO:0031144">
    <property type="term" value="P:proteasome localization"/>
    <property type="evidence" value="ECO:0007669"/>
    <property type="project" value="InterPro"/>
</dbReference>
<dbReference type="GO" id="GO:0015031">
    <property type="term" value="P:protein transport"/>
    <property type="evidence" value="ECO:0007669"/>
    <property type="project" value="UniProtKB-KW"/>
</dbReference>
<dbReference type="FunFam" id="1.20.58.1590:FF:000001">
    <property type="entry name" value="Tethering factor for nuclear proteasome STS1"/>
    <property type="match status" value="1"/>
</dbReference>
<dbReference type="Gene3D" id="1.20.58.1590">
    <property type="entry name" value="Tethering factor for nuclear proteasome Cut8/Sts1"/>
    <property type="match status" value="1"/>
</dbReference>
<dbReference type="InterPro" id="IPR013868">
    <property type="entry name" value="Cut8/Sts1_fam"/>
</dbReference>
<dbReference type="InterPro" id="IPR038422">
    <property type="entry name" value="Cut8/Sts1_sf"/>
</dbReference>
<dbReference type="PANTHER" id="PTHR28032">
    <property type="entry name" value="FI02826P"/>
    <property type="match status" value="1"/>
</dbReference>
<dbReference type="PANTHER" id="PTHR28032:SF1">
    <property type="entry name" value="FI02826P"/>
    <property type="match status" value="1"/>
</dbReference>
<dbReference type="Pfam" id="PF08559">
    <property type="entry name" value="Cut8"/>
    <property type="match status" value="1"/>
</dbReference>
<reference key="1">
    <citation type="journal article" date="2009" name="Genome Res.">
        <title>Comparative genomic analyses of the human fungal pathogens Coccidioides and their relatives.</title>
        <authorList>
            <person name="Sharpton T.J."/>
            <person name="Stajich J.E."/>
            <person name="Rounsley S.D."/>
            <person name="Gardner M.J."/>
            <person name="Wortman J.R."/>
            <person name="Jordar V.S."/>
            <person name="Maiti R."/>
            <person name="Kodira C.D."/>
            <person name="Neafsey D.E."/>
            <person name="Zeng Q."/>
            <person name="Hung C.-Y."/>
            <person name="McMahan C."/>
            <person name="Muszewska A."/>
            <person name="Grynberg M."/>
            <person name="Mandel M.A."/>
            <person name="Kellner E.M."/>
            <person name="Barker B.M."/>
            <person name="Galgiani J.N."/>
            <person name="Orbach M.J."/>
            <person name="Kirkland T.N."/>
            <person name="Cole G.T."/>
            <person name="Henn M.R."/>
            <person name="Birren B.W."/>
            <person name="Taylor J.W."/>
        </authorList>
    </citation>
    <scope>NUCLEOTIDE SEQUENCE [LARGE SCALE GENOMIC DNA]</scope>
    <source>
        <strain>C735</strain>
    </source>
</reference>
<organism>
    <name type="scientific">Coccidioides posadasii (strain C735)</name>
    <name type="common">Valley fever fungus</name>
    <dbReference type="NCBI Taxonomy" id="222929"/>
    <lineage>
        <taxon>Eukaryota</taxon>
        <taxon>Fungi</taxon>
        <taxon>Dikarya</taxon>
        <taxon>Ascomycota</taxon>
        <taxon>Pezizomycotina</taxon>
        <taxon>Eurotiomycetes</taxon>
        <taxon>Eurotiomycetidae</taxon>
        <taxon>Onygenales</taxon>
        <taxon>Onygenaceae</taxon>
        <taxon>Coccidioides</taxon>
    </lineage>
</organism>
<name>STS1_COCP7</name>
<sequence length="314" mass="34490">MNSLVATPPIPPHFYEHNRFNTTSRFVSPMNPAGSRKRKAEDDNGSSDHDTRMSASPTSSPALPTKPLAARQIKRPRPNLSGRPLSLGRLFETLDSDALRSVLRSLCDRHPELGQEVVDTAPRPNITSALQVLSNYQSTLQSSFPLGGNPSSDYAYNRVRPHVMNLLDALNDFTPHFLPPNETHPSTSLNYLDGVTEIIHQLPRWDTPHYNLEKEAAYEEIAKAWALVIREASKRGGGIQLQYGEWDQKLAKHNQTSGGKLQDAVHELSASLGWMAGNPSHPGPGCPQADTASIRQQLLSGTYGAGLPLKVGPW</sequence>
<protein>
    <recommendedName>
        <fullName>Tethering factor for nuclear proteasome STS1</fullName>
    </recommendedName>
</protein>
<feature type="chain" id="PRO_0000409407" description="Tethering factor for nuclear proteasome STS1">
    <location>
        <begin position="1"/>
        <end position="314"/>
    </location>
</feature>
<feature type="region of interest" description="Disordered" evidence="2">
    <location>
        <begin position="24"/>
        <end position="85"/>
    </location>
</feature>
<feature type="compositionally biased region" description="Basic and acidic residues" evidence="2">
    <location>
        <begin position="39"/>
        <end position="52"/>
    </location>
</feature>
<feature type="compositionally biased region" description="Low complexity" evidence="2">
    <location>
        <begin position="54"/>
        <end position="68"/>
    </location>
</feature>
<gene>
    <name type="primary">STS1</name>
    <name type="ORF">CPC735_002580</name>
</gene>